<evidence type="ECO:0000255" key="1">
    <source>
        <dbReference type="PROSITE-ProRule" id="PRU00303"/>
    </source>
</evidence>
<evidence type="ECO:0000256" key="2">
    <source>
        <dbReference type="SAM" id="MobiDB-lite"/>
    </source>
</evidence>
<evidence type="ECO:0000305" key="3"/>
<sequence>MVIKKGFFALSSCTLGLGLILTACGARGKFDQVDDGVIKLATSIQNKDSIAALNTIYKKYKERHPGSYPVQNFQVPGGYSGLRNDIRTRLSAKDGNNFYNIVLNYPDVVSSLATSDMQLILDNVDTKLLSKNFLSFNERIGGVRQKGIYAIPISLSTELMVLNGPVLHYILNSAKKKENGAQMIKRSGSFSTVQKGTMAIDMNDQKTKDLWQKIENAAKANGKTTSTQTSPQPKNAVSSLQLKQAAEGTSTDNSQDAENSDNEIKKTWGEYKEEGNHTLKGYTFKASVFENWNELLDFSTRVANSFPDKIKNQASKKATELQGVFGVDSVSGALFSATFAAGGGDYDKFFFNVKNGRGNFRNLLEKGSSYNNLQKVFNDYKQLISSNGLYINKGGAYSSNFLKFHQLAFSVGSSSGYHFAFAGESAKRLEFGQKAIEYPRDTYEIKAPTNSQNGNGTLLGSFTKSKSNGKEQSGQDEDNQTSETIELYKSSVPSGKEAGKNALAITNQQLISALENAAKDNKTSQPQARSLTASDQVQITQSSDKVIGYITTSNLDIDNNNTFDVGKLNGDKSTSKIIVNATLKTLNKINTLQSEEGIILPHPQKYKSTDPQAVATVQGPSIIGVHANAKENAETQKFINWFINQKETWPENSKGNKNGQNGQMTAAQYFAKSSGYVLPYSETFTKQSEDEHSTTKDAYKILKDVNDGKLVGYSDPSDFRSGKFRDTIVAAFSGAVSSKADFNKFFKGFEQQLGQEYRRG</sequence>
<proteinExistence type="inferred from homology"/>
<keyword id="KW-1003">Cell membrane</keyword>
<keyword id="KW-0449">Lipoprotein</keyword>
<keyword id="KW-0472">Membrane</keyword>
<keyword id="KW-0564">Palmitate</keyword>
<keyword id="KW-1185">Reference proteome</keyword>
<keyword id="KW-0732">Signal</keyword>
<dbReference type="EMBL" id="U00089">
    <property type="protein sequence ID" value="AAB96078.1"/>
    <property type="molecule type" value="Genomic_DNA"/>
</dbReference>
<dbReference type="PIR" id="S73756">
    <property type="entry name" value="S73756"/>
</dbReference>
<dbReference type="RefSeq" id="NP_110096.1">
    <property type="nucleotide sequence ID" value="NC_000912.1"/>
</dbReference>
<dbReference type="RefSeq" id="WP_010874764.1">
    <property type="nucleotide sequence ID" value="NZ_OU342337.1"/>
</dbReference>
<dbReference type="STRING" id="272634.MPN_408"/>
<dbReference type="EnsemblBacteria" id="AAB96078">
    <property type="protein sequence ID" value="AAB96078"/>
    <property type="gene ID" value="MPN_408"/>
</dbReference>
<dbReference type="KEGG" id="mpn:MPN_408"/>
<dbReference type="PATRIC" id="fig|272634.6.peg.442"/>
<dbReference type="HOGENOM" id="CLU_017227_1_0_14"/>
<dbReference type="OrthoDB" id="393769at2"/>
<dbReference type="BioCyc" id="MPNE272634:G1GJ3-656-MONOMER"/>
<dbReference type="Proteomes" id="UP000000808">
    <property type="component" value="Chromosome"/>
</dbReference>
<dbReference type="GO" id="GO:0005886">
    <property type="term" value="C:plasma membrane"/>
    <property type="evidence" value="ECO:0007669"/>
    <property type="project" value="UniProtKB-SubCell"/>
</dbReference>
<dbReference type="InterPro" id="IPR004890">
    <property type="entry name" value="Lipoprotein_10_C"/>
</dbReference>
<dbReference type="InterPro" id="IPR004984">
    <property type="entry name" value="Mycoplasma_lipoprotein_cen_dom"/>
</dbReference>
<dbReference type="InterPro" id="IPR054825">
    <property type="entry name" value="P68-like"/>
</dbReference>
<dbReference type="NCBIfam" id="NF045826">
    <property type="entry name" value="lipo_P68"/>
    <property type="match status" value="1"/>
</dbReference>
<dbReference type="Pfam" id="PF03202">
    <property type="entry name" value="Lipoprotein_10"/>
    <property type="match status" value="1"/>
</dbReference>
<dbReference type="Pfam" id="PF03305">
    <property type="entry name" value="Lipoprotein_X"/>
    <property type="match status" value="1"/>
</dbReference>
<dbReference type="PROSITE" id="PS51257">
    <property type="entry name" value="PROKAR_LIPOPROTEIN"/>
    <property type="match status" value="1"/>
</dbReference>
<accession>P75376</accession>
<organism>
    <name type="scientific">Mycoplasma pneumoniae (strain ATCC 29342 / M129 / Subtype 1)</name>
    <name type="common">Mycoplasmoides pneumoniae</name>
    <dbReference type="NCBI Taxonomy" id="272634"/>
    <lineage>
        <taxon>Bacteria</taxon>
        <taxon>Bacillati</taxon>
        <taxon>Mycoplasmatota</taxon>
        <taxon>Mycoplasmoidales</taxon>
        <taxon>Mycoplasmoidaceae</taxon>
        <taxon>Mycoplasmoides</taxon>
    </lineage>
</organism>
<comment type="subcellular location">
    <subcellularLocation>
        <location evidence="1">Cell membrane</location>
        <topology evidence="1">Lipid-anchor</topology>
    </subcellularLocation>
</comment>
<comment type="similarity">
    <text evidence="3">Belongs to the MG185/MG260 family.</text>
</comment>
<feature type="signal peptide" evidence="1">
    <location>
        <begin position="1"/>
        <end position="23"/>
    </location>
</feature>
<feature type="chain" id="PRO_0000018733" description="Uncharacterized lipoprotein MPN_408">
    <location>
        <begin position="24"/>
        <end position="760"/>
    </location>
</feature>
<feature type="region of interest" description="Disordered" evidence="2">
    <location>
        <begin position="220"/>
        <end position="262"/>
    </location>
</feature>
<feature type="region of interest" description="Disordered" evidence="2">
    <location>
        <begin position="443"/>
        <end position="482"/>
    </location>
</feature>
<feature type="compositionally biased region" description="Polar residues" evidence="2">
    <location>
        <begin position="222"/>
        <end position="257"/>
    </location>
</feature>
<feature type="compositionally biased region" description="Polar residues" evidence="2">
    <location>
        <begin position="448"/>
        <end position="472"/>
    </location>
</feature>
<feature type="lipid moiety-binding region" description="N-palmitoyl cysteine" evidence="1">
    <location>
        <position position="24"/>
    </location>
</feature>
<feature type="lipid moiety-binding region" description="S-diacylglycerol cysteine" evidence="1">
    <location>
        <position position="24"/>
    </location>
</feature>
<protein>
    <recommendedName>
        <fullName>Uncharacterized lipoprotein MPN_408</fullName>
    </recommendedName>
</protein>
<gene>
    <name type="ordered locus">MPN_408</name>
    <name type="ORF">F11_orf760</name>
    <name type="ORF">MP430</name>
</gene>
<reference key="1">
    <citation type="journal article" date="1996" name="Nucleic Acids Res.">
        <title>Complete sequence analysis of the genome of the bacterium Mycoplasma pneumoniae.</title>
        <authorList>
            <person name="Himmelreich R."/>
            <person name="Hilbert H."/>
            <person name="Plagens H."/>
            <person name="Pirkl E."/>
            <person name="Li B.-C."/>
            <person name="Herrmann R."/>
        </authorList>
    </citation>
    <scope>NUCLEOTIDE SEQUENCE [LARGE SCALE GENOMIC DNA]</scope>
    <source>
        <strain>ATCC 29342 / M129 / Subtype 1</strain>
    </source>
</reference>
<name>Y408_MYCPN</name>